<organism>
    <name type="scientific">Homo sapiens</name>
    <name type="common">Human</name>
    <dbReference type="NCBI Taxonomy" id="9606"/>
    <lineage>
        <taxon>Eukaryota</taxon>
        <taxon>Metazoa</taxon>
        <taxon>Chordata</taxon>
        <taxon>Craniata</taxon>
        <taxon>Vertebrata</taxon>
        <taxon>Euteleostomi</taxon>
        <taxon>Mammalia</taxon>
        <taxon>Eutheria</taxon>
        <taxon>Euarchontoglires</taxon>
        <taxon>Primates</taxon>
        <taxon>Haplorrhini</taxon>
        <taxon>Catarrhini</taxon>
        <taxon>Hominidae</taxon>
        <taxon>Homo</taxon>
    </lineage>
</organism>
<dbReference type="EMBL" id="M17886">
    <property type="protein sequence ID" value="AAA36471.1"/>
    <property type="molecule type" value="mRNA"/>
</dbReference>
<dbReference type="EMBL" id="AB061836">
    <property type="protein sequence ID" value="BAB79474.1"/>
    <property type="molecule type" value="Genomic_DNA"/>
</dbReference>
<dbReference type="EMBL" id="AC027237">
    <property type="status" value="NOT_ANNOTATED_CDS"/>
    <property type="molecule type" value="Genomic_DNA"/>
</dbReference>
<dbReference type="EMBL" id="CH471082">
    <property type="protein sequence ID" value="EAW77845.1"/>
    <property type="molecule type" value="Genomic_DNA"/>
</dbReference>
<dbReference type="EMBL" id="BC003369">
    <property type="protein sequence ID" value="AAH03369.1"/>
    <property type="molecule type" value="mRNA"/>
</dbReference>
<dbReference type="EMBL" id="BC007590">
    <property type="protein sequence ID" value="AAH07590.1"/>
    <property type="molecule type" value="mRNA"/>
</dbReference>
<dbReference type="EMBL" id="CD388103">
    <property type="status" value="NOT_ANNOTATED_CDS"/>
    <property type="molecule type" value="mRNA"/>
</dbReference>
<dbReference type="CCDS" id="CCDS10233.1">
    <molecule id="P05386-1"/>
</dbReference>
<dbReference type="CCDS" id="CCDS10234.1">
    <molecule id="P05386-2"/>
</dbReference>
<dbReference type="PIR" id="B27125">
    <property type="entry name" value="R6HUP1"/>
</dbReference>
<dbReference type="RefSeq" id="NP_000994.1">
    <molecule id="P05386-1"/>
    <property type="nucleotide sequence ID" value="NM_001003.3"/>
</dbReference>
<dbReference type="RefSeq" id="NP_998890.1">
    <molecule id="P05386-2"/>
    <property type="nucleotide sequence ID" value="NM_213725.2"/>
</dbReference>
<dbReference type="PDB" id="2LBF">
    <property type="method" value="NMR"/>
    <property type="chains" value="A=1-69"/>
</dbReference>
<dbReference type="PDB" id="4BEH">
    <property type="method" value="NMR"/>
    <property type="chains" value="A=1-114"/>
</dbReference>
<dbReference type="PDB" id="4V6X">
    <property type="method" value="EM"/>
    <property type="resolution" value="5.00 A"/>
    <property type="chains" value="Cs/Ct=1-114"/>
</dbReference>
<dbReference type="PDBsum" id="2LBF"/>
<dbReference type="PDBsum" id="4BEH"/>
<dbReference type="PDBsum" id="4V6X"/>
<dbReference type="BMRB" id="P05386"/>
<dbReference type="SMR" id="P05386"/>
<dbReference type="BioGRID" id="112095">
    <property type="interactions" value="314"/>
</dbReference>
<dbReference type="ComplexPortal" id="CPX-5183">
    <property type="entry name" value="60S cytosolic large ribosomal subunit"/>
</dbReference>
<dbReference type="ComplexPortal" id="CPX-7664">
    <property type="entry name" value="60S cytosolic large ribosomal subunit, testis-specific variant"/>
</dbReference>
<dbReference type="ComplexPortal" id="CPX-7665">
    <property type="entry name" value="60S cytosolic large ribosomal subunit, striated muscle variant"/>
</dbReference>
<dbReference type="CORUM" id="P05386"/>
<dbReference type="FunCoup" id="P05386">
    <property type="interactions" value="699"/>
</dbReference>
<dbReference type="IntAct" id="P05386">
    <property type="interactions" value="175"/>
</dbReference>
<dbReference type="MINT" id="P05386"/>
<dbReference type="STRING" id="9606.ENSP00000346037"/>
<dbReference type="GlyGen" id="P05386">
    <property type="glycosylation" value="1 site, 1 O-linked glycan (1 site)"/>
</dbReference>
<dbReference type="iPTMnet" id="P05386"/>
<dbReference type="MetOSite" id="P05386"/>
<dbReference type="PhosphoSitePlus" id="P05386"/>
<dbReference type="SwissPalm" id="P05386"/>
<dbReference type="BioMuta" id="RPLP1"/>
<dbReference type="jPOST" id="P05386"/>
<dbReference type="MassIVE" id="P05386"/>
<dbReference type="PaxDb" id="9606-ENSP00000346037"/>
<dbReference type="PeptideAtlas" id="P05386"/>
<dbReference type="PRIDE" id="P05386"/>
<dbReference type="ProteomicsDB" id="1259"/>
<dbReference type="ProteomicsDB" id="51831">
    <molecule id="P05386-1"/>
</dbReference>
<dbReference type="Pumba" id="P05386"/>
<dbReference type="TopDownProteomics" id="P05386-1">
    <molecule id="P05386-1"/>
</dbReference>
<dbReference type="TopDownProteomics" id="P05386-2">
    <molecule id="P05386-2"/>
</dbReference>
<dbReference type="Antibodypedia" id="1247">
    <property type="antibodies" value="158 antibodies from 28 providers"/>
</dbReference>
<dbReference type="DNASU" id="6176"/>
<dbReference type="Ensembl" id="ENST00000260379.11">
    <molecule id="P05386-1"/>
    <property type="protein sequence ID" value="ENSP00000346037.5"/>
    <property type="gene ID" value="ENSG00000137818.12"/>
</dbReference>
<dbReference type="Ensembl" id="ENST00000357790.5">
    <molecule id="P05386-2"/>
    <property type="protein sequence ID" value="ENSP00000350437.5"/>
    <property type="gene ID" value="ENSG00000137818.12"/>
</dbReference>
<dbReference type="GeneID" id="6176"/>
<dbReference type="KEGG" id="hsa:6176"/>
<dbReference type="MANE-Select" id="ENST00000260379.11">
    <property type="protein sequence ID" value="ENSP00000346037.5"/>
    <property type="RefSeq nucleotide sequence ID" value="NM_001003.3"/>
    <property type="RefSeq protein sequence ID" value="NP_000994.1"/>
</dbReference>
<dbReference type="UCSC" id="uc002asd.2">
    <molecule id="P05386-1"/>
    <property type="organism name" value="human"/>
</dbReference>
<dbReference type="AGR" id="HGNC:10372"/>
<dbReference type="CTD" id="6176"/>
<dbReference type="DisGeNET" id="6176"/>
<dbReference type="GeneCards" id="RPLP1"/>
<dbReference type="HGNC" id="HGNC:10372">
    <property type="gene designation" value="RPLP1"/>
</dbReference>
<dbReference type="HPA" id="ENSG00000137818">
    <property type="expression patterns" value="Low tissue specificity"/>
</dbReference>
<dbReference type="MIM" id="180520">
    <property type="type" value="gene"/>
</dbReference>
<dbReference type="neXtProt" id="NX_P05386"/>
<dbReference type="OpenTargets" id="ENSG00000137818"/>
<dbReference type="PharmGKB" id="PA34775"/>
<dbReference type="VEuPathDB" id="HostDB:ENSG00000137818"/>
<dbReference type="eggNOG" id="KOG1762">
    <property type="taxonomic scope" value="Eukaryota"/>
</dbReference>
<dbReference type="GeneTree" id="ENSGT00550000074698"/>
<dbReference type="HOGENOM" id="CLU_114656_1_2_1"/>
<dbReference type="InParanoid" id="P05386"/>
<dbReference type="OMA" id="REELMCV"/>
<dbReference type="OrthoDB" id="9631264at2759"/>
<dbReference type="PAN-GO" id="P05386">
    <property type="GO annotations" value="5 GO annotations based on evolutionary models"/>
</dbReference>
<dbReference type="PhylomeDB" id="P05386"/>
<dbReference type="TreeFam" id="TF312932"/>
<dbReference type="PathwayCommons" id="P05386"/>
<dbReference type="Reactome" id="R-HSA-156827">
    <property type="pathway name" value="L13a-mediated translational silencing of Ceruloplasmin expression"/>
</dbReference>
<dbReference type="Reactome" id="R-HSA-156902">
    <property type="pathway name" value="Peptide chain elongation"/>
</dbReference>
<dbReference type="Reactome" id="R-HSA-1799339">
    <property type="pathway name" value="SRP-dependent cotranslational protein targeting to membrane"/>
</dbReference>
<dbReference type="Reactome" id="R-HSA-192823">
    <property type="pathway name" value="Viral mRNA Translation"/>
</dbReference>
<dbReference type="Reactome" id="R-HSA-2408557">
    <property type="pathway name" value="Selenocysteine synthesis"/>
</dbReference>
<dbReference type="Reactome" id="R-HSA-6791226">
    <property type="pathway name" value="Major pathway of rRNA processing in the nucleolus and cytosol"/>
</dbReference>
<dbReference type="Reactome" id="R-HSA-72689">
    <property type="pathway name" value="Formation of a pool of free 40S subunits"/>
</dbReference>
<dbReference type="Reactome" id="R-HSA-72706">
    <property type="pathway name" value="GTP hydrolysis and joining of the 60S ribosomal subunit"/>
</dbReference>
<dbReference type="Reactome" id="R-HSA-72764">
    <property type="pathway name" value="Eukaryotic Translation Termination"/>
</dbReference>
<dbReference type="Reactome" id="R-HSA-9010553">
    <property type="pathway name" value="Regulation of expression of SLITs and ROBOs"/>
</dbReference>
<dbReference type="Reactome" id="R-HSA-9633012">
    <property type="pathway name" value="Response of EIF2AK4 (GCN2) to amino acid deficiency"/>
</dbReference>
<dbReference type="Reactome" id="R-HSA-975956">
    <property type="pathway name" value="Nonsense Mediated Decay (NMD) independent of the Exon Junction Complex (EJC)"/>
</dbReference>
<dbReference type="Reactome" id="R-HSA-975957">
    <property type="pathway name" value="Nonsense Mediated Decay (NMD) enhanced by the Exon Junction Complex (EJC)"/>
</dbReference>
<dbReference type="SignaLink" id="P05386"/>
<dbReference type="SIGNOR" id="P05386"/>
<dbReference type="BioGRID-ORCS" id="6176">
    <property type="hits" value="826 hits in 1137 CRISPR screens"/>
</dbReference>
<dbReference type="ChiTaRS" id="RPLP1">
    <property type="organism name" value="human"/>
</dbReference>
<dbReference type="EvolutionaryTrace" id="P05386"/>
<dbReference type="GeneWiki" id="RPLP1"/>
<dbReference type="GenomeRNAi" id="6176"/>
<dbReference type="Pharos" id="P05386">
    <property type="development level" value="Tbio"/>
</dbReference>
<dbReference type="PRO" id="PR:P05386"/>
<dbReference type="Proteomes" id="UP000005640">
    <property type="component" value="Chromosome 15"/>
</dbReference>
<dbReference type="RNAct" id="P05386">
    <property type="molecule type" value="protein"/>
</dbReference>
<dbReference type="Bgee" id="ENSG00000137818">
    <property type="expression patterns" value="Expressed in epithelium of bronchus and 114 other cell types or tissues"/>
</dbReference>
<dbReference type="ExpressionAtlas" id="P05386">
    <property type="expression patterns" value="baseline and differential"/>
</dbReference>
<dbReference type="GO" id="GO:0005737">
    <property type="term" value="C:cytoplasm"/>
    <property type="evidence" value="ECO:0000303"/>
    <property type="project" value="ComplexPortal"/>
</dbReference>
<dbReference type="GO" id="GO:0005829">
    <property type="term" value="C:cytosol"/>
    <property type="evidence" value="ECO:0000304"/>
    <property type="project" value="Reactome"/>
</dbReference>
<dbReference type="GO" id="GO:0022625">
    <property type="term" value="C:cytosolic large ribosomal subunit"/>
    <property type="evidence" value="ECO:0000314"/>
    <property type="project" value="GO_Central"/>
</dbReference>
<dbReference type="GO" id="GO:0022626">
    <property type="term" value="C:cytosolic ribosome"/>
    <property type="evidence" value="ECO:0000314"/>
    <property type="project" value="FlyBase"/>
</dbReference>
<dbReference type="GO" id="GO:0005925">
    <property type="term" value="C:focal adhesion"/>
    <property type="evidence" value="ECO:0007005"/>
    <property type="project" value="UniProtKB"/>
</dbReference>
<dbReference type="GO" id="GO:0030295">
    <property type="term" value="F:protein kinase activator activity"/>
    <property type="evidence" value="ECO:0000318"/>
    <property type="project" value="GO_Central"/>
</dbReference>
<dbReference type="GO" id="GO:0043021">
    <property type="term" value="F:ribonucleoprotein complex binding"/>
    <property type="evidence" value="ECO:0000318"/>
    <property type="project" value="GO_Central"/>
</dbReference>
<dbReference type="GO" id="GO:0003735">
    <property type="term" value="F:structural constituent of ribosome"/>
    <property type="evidence" value="ECO:0000314"/>
    <property type="project" value="FlyBase"/>
</dbReference>
<dbReference type="GO" id="GO:0002181">
    <property type="term" value="P:cytoplasmic translation"/>
    <property type="evidence" value="ECO:0000318"/>
    <property type="project" value="GO_Central"/>
</dbReference>
<dbReference type="GO" id="GO:0006412">
    <property type="term" value="P:translation"/>
    <property type="evidence" value="ECO:0000303"/>
    <property type="project" value="UniProtKB"/>
</dbReference>
<dbReference type="GO" id="GO:0006414">
    <property type="term" value="P:translational elongation"/>
    <property type="evidence" value="ECO:0007669"/>
    <property type="project" value="InterPro"/>
</dbReference>
<dbReference type="CDD" id="cd05831">
    <property type="entry name" value="Ribosomal_P1"/>
    <property type="match status" value="1"/>
</dbReference>
<dbReference type="DisProt" id="DP01253"/>
<dbReference type="FunFam" id="1.10.10.1410:FF:000001">
    <property type="entry name" value="60S acidic ribosomal protein P1"/>
    <property type="match status" value="1"/>
</dbReference>
<dbReference type="Gene3D" id="1.10.10.1410">
    <property type="match status" value="1"/>
</dbReference>
<dbReference type="HAMAP" id="MF_01478">
    <property type="entry name" value="Ribosomal_L12_arch"/>
    <property type="match status" value="1"/>
</dbReference>
<dbReference type="InterPro" id="IPR038716">
    <property type="entry name" value="P1/P2_N_sf"/>
</dbReference>
<dbReference type="InterPro" id="IPR027534">
    <property type="entry name" value="Ribosomal_P1/P2"/>
</dbReference>
<dbReference type="PANTHER" id="PTHR45696">
    <property type="entry name" value="60S ACIDIC RIBOSOMAL PROTEIN P1"/>
    <property type="match status" value="1"/>
</dbReference>
<dbReference type="PANTHER" id="PTHR45696:SF32">
    <property type="entry name" value="LARGE RIBOSOMAL SUBUNIT PROTEIN P1"/>
    <property type="match status" value="1"/>
</dbReference>
<dbReference type="Pfam" id="PF00428">
    <property type="entry name" value="Ribosomal_60s"/>
    <property type="match status" value="1"/>
</dbReference>
<reference key="1">
    <citation type="journal article" date="1987" name="Mol. Cell. Biol.">
        <title>Human acidic ribosomal phosphoproteins P0, P1, and P2: analysis of cDNA clones, in vitro synthesis, and assembly.</title>
        <authorList>
            <person name="Rich B.E."/>
            <person name="Steitz J.A."/>
        </authorList>
    </citation>
    <scope>NUCLEOTIDE SEQUENCE [MRNA] (ISOFORM 1)</scope>
</reference>
<reference key="2">
    <citation type="journal article" date="2002" name="Genome Res.">
        <title>The human ribosomal protein genes: sequencing and comparative analysis of 73 genes.</title>
        <authorList>
            <person name="Yoshihama M."/>
            <person name="Uechi T."/>
            <person name="Asakawa S."/>
            <person name="Kawasaki K."/>
            <person name="Kato S."/>
            <person name="Higa S."/>
            <person name="Maeda N."/>
            <person name="Minoshima S."/>
            <person name="Tanaka T."/>
            <person name="Shimizu N."/>
            <person name="Kenmochi N."/>
        </authorList>
    </citation>
    <scope>NUCLEOTIDE SEQUENCE [GENOMIC DNA]</scope>
</reference>
<reference key="3">
    <citation type="journal article" date="2006" name="Nature">
        <title>Analysis of the DNA sequence and duplication history of human chromosome 15.</title>
        <authorList>
            <person name="Zody M.C."/>
            <person name="Garber M."/>
            <person name="Sharpe T."/>
            <person name="Young S.K."/>
            <person name="Rowen L."/>
            <person name="O'Neill K."/>
            <person name="Whittaker C.A."/>
            <person name="Kamal M."/>
            <person name="Chang J.L."/>
            <person name="Cuomo C.A."/>
            <person name="Dewar K."/>
            <person name="FitzGerald M.G."/>
            <person name="Kodira C.D."/>
            <person name="Madan A."/>
            <person name="Qin S."/>
            <person name="Yang X."/>
            <person name="Abbasi N."/>
            <person name="Abouelleil A."/>
            <person name="Arachchi H.M."/>
            <person name="Baradarani L."/>
            <person name="Birditt B."/>
            <person name="Bloom S."/>
            <person name="Bloom T."/>
            <person name="Borowsky M.L."/>
            <person name="Burke J."/>
            <person name="Butler J."/>
            <person name="Cook A."/>
            <person name="DeArellano K."/>
            <person name="DeCaprio D."/>
            <person name="Dorris L. III"/>
            <person name="Dors M."/>
            <person name="Eichler E.E."/>
            <person name="Engels R."/>
            <person name="Fahey J."/>
            <person name="Fleetwood P."/>
            <person name="Friedman C."/>
            <person name="Gearin G."/>
            <person name="Hall J.L."/>
            <person name="Hensley G."/>
            <person name="Johnson E."/>
            <person name="Jones C."/>
            <person name="Kamat A."/>
            <person name="Kaur A."/>
            <person name="Locke D.P."/>
            <person name="Madan A."/>
            <person name="Munson G."/>
            <person name="Jaffe D.B."/>
            <person name="Lui A."/>
            <person name="Macdonald P."/>
            <person name="Mauceli E."/>
            <person name="Naylor J.W."/>
            <person name="Nesbitt R."/>
            <person name="Nicol R."/>
            <person name="O'Leary S.B."/>
            <person name="Ratcliffe A."/>
            <person name="Rounsley S."/>
            <person name="She X."/>
            <person name="Sneddon K.M.B."/>
            <person name="Stewart S."/>
            <person name="Sougnez C."/>
            <person name="Stone S.M."/>
            <person name="Topham K."/>
            <person name="Vincent D."/>
            <person name="Wang S."/>
            <person name="Zimmer A.R."/>
            <person name="Birren B.W."/>
            <person name="Hood L."/>
            <person name="Lander E.S."/>
            <person name="Nusbaum C."/>
        </authorList>
    </citation>
    <scope>NUCLEOTIDE SEQUENCE [LARGE SCALE GENOMIC DNA]</scope>
</reference>
<reference key="4">
    <citation type="submission" date="2005-07" db="EMBL/GenBank/DDBJ databases">
        <authorList>
            <person name="Mural R.J."/>
            <person name="Istrail S."/>
            <person name="Sutton G."/>
            <person name="Florea L."/>
            <person name="Halpern A.L."/>
            <person name="Mobarry C.M."/>
            <person name="Lippert R."/>
            <person name="Walenz B."/>
            <person name="Shatkay H."/>
            <person name="Dew I."/>
            <person name="Miller J.R."/>
            <person name="Flanigan M.J."/>
            <person name="Edwards N.J."/>
            <person name="Bolanos R."/>
            <person name="Fasulo D."/>
            <person name="Halldorsson B.V."/>
            <person name="Hannenhalli S."/>
            <person name="Turner R."/>
            <person name="Yooseph S."/>
            <person name="Lu F."/>
            <person name="Nusskern D.R."/>
            <person name="Shue B.C."/>
            <person name="Zheng X.H."/>
            <person name="Zhong F."/>
            <person name="Delcher A.L."/>
            <person name="Huson D.H."/>
            <person name="Kravitz S.A."/>
            <person name="Mouchard L."/>
            <person name="Reinert K."/>
            <person name="Remington K.A."/>
            <person name="Clark A.G."/>
            <person name="Waterman M.S."/>
            <person name="Eichler E.E."/>
            <person name="Adams M.D."/>
            <person name="Hunkapiller M.W."/>
            <person name="Myers E.W."/>
            <person name="Venter J.C."/>
        </authorList>
    </citation>
    <scope>NUCLEOTIDE SEQUENCE [LARGE SCALE GENOMIC DNA]</scope>
</reference>
<reference key="5">
    <citation type="journal article" date="2004" name="Genome Res.">
        <title>The status, quality, and expansion of the NIH full-length cDNA project: the Mammalian Gene Collection (MGC).</title>
        <authorList>
            <consortium name="The MGC Project Team"/>
        </authorList>
    </citation>
    <scope>NUCLEOTIDE SEQUENCE [LARGE SCALE MRNA] (ISOFORMS 1 AND 2)</scope>
    <source>
        <tissue>Eye</tissue>
        <tissue>Placenta</tissue>
        <tissue>Trophoblast</tissue>
    </source>
</reference>
<reference key="6">
    <citation type="journal article" date="2004" name="Proteomics">
        <title>Identification and characterization of phosphorylated proteins in the human pituitary.</title>
        <authorList>
            <person name="Giorgianni F."/>
            <person name="Beranova-Giorgianni S."/>
            <person name="Desiderio D.M."/>
        </authorList>
    </citation>
    <scope>PHOSPHORYLATION AT SER-101</scope>
    <source>
        <tissue>Pituitary</tissue>
    </source>
</reference>
<reference key="7">
    <citation type="journal article" date="2006" name="Pituitary">
        <title>Phosphoproteomic analysis of the human pituitary.</title>
        <authorList>
            <person name="Beranova-Giorgianni S."/>
            <person name="Zhao Y."/>
            <person name="Desiderio D.M."/>
            <person name="Giorgianni F."/>
        </authorList>
    </citation>
    <scope>PHOSPHORYLATION [LARGE SCALE ANALYSIS] AT SER-101</scope>
    <scope>IDENTIFICATION BY MASS SPECTROMETRY [LARGE SCALE ANALYSIS]</scope>
    <source>
        <tissue>Pituitary</tissue>
    </source>
</reference>
<reference key="8">
    <citation type="journal article" date="2009" name="Anal. Chem.">
        <title>Lys-N and trypsin cover complementary parts of the phosphoproteome in a refined SCX-based approach.</title>
        <authorList>
            <person name="Gauci S."/>
            <person name="Helbig A.O."/>
            <person name="Slijper M."/>
            <person name="Krijgsveld J."/>
            <person name="Heck A.J."/>
            <person name="Mohammed S."/>
        </authorList>
    </citation>
    <scope>ACETYLATION [LARGE SCALE ANALYSIS] AT ALA-2</scope>
    <scope>CLEAVAGE OF INITIATOR METHIONINE [LARGE SCALE ANALYSIS]</scope>
    <scope>IDENTIFICATION BY MASS SPECTROMETRY [LARGE SCALE ANALYSIS]</scope>
</reference>
<reference key="9">
    <citation type="journal article" date="2011" name="BMC Syst. Biol.">
        <title>Initial characterization of the human central proteome.</title>
        <authorList>
            <person name="Burkard T.R."/>
            <person name="Planyavsky M."/>
            <person name="Kaupe I."/>
            <person name="Breitwieser F.P."/>
            <person name="Buerckstuemmer T."/>
            <person name="Bennett K.L."/>
            <person name="Superti-Furga G."/>
            <person name="Colinge J."/>
        </authorList>
    </citation>
    <scope>IDENTIFICATION BY MASS SPECTROMETRY [LARGE SCALE ANALYSIS]</scope>
</reference>
<reference key="10">
    <citation type="journal article" date="2012" name="Mol. Cell. Proteomics">
        <title>Comparative large-scale characterisation of plant vs. mammal proteins reveals similar and idiosyncratic N-alpha acetylation features.</title>
        <authorList>
            <person name="Bienvenut W.V."/>
            <person name="Sumpton D."/>
            <person name="Martinez A."/>
            <person name="Lilla S."/>
            <person name="Espagne C."/>
            <person name="Meinnel T."/>
            <person name="Giglione C."/>
        </authorList>
    </citation>
    <scope>ACETYLATION [LARGE SCALE ANALYSIS] AT ALA-2</scope>
    <scope>CLEAVAGE OF INITIATOR METHIONINE [LARGE SCALE ANALYSIS]</scope>
    <scope>IDENTIFICATION BY MASS SPECTROMETRY [LARGE SCALE ANALYSIS]</scope>
</reference>
<reference key="11">
    <citation type="journal article" date="2014" name="Curr. Opin. Struct. Biol.">
        <title>A new system for naming ribosomal proteins.</title>
        <authorList>
            <person name="Ban N."/>
            <person name="Beckmann R."/>
            <person name="Cate J.H.D."/>
            <person name="Dinman J.D."/>
            <person name="Dragon F."/>
            <person name="Ellis S.R."/>
            <person name="Lafontaine D.L.J."/>
            <person name="Lindahl L."/>
            <person name="Liljas A."/>
            <person name="Lipton J.M."/>
            <person name="McAlear M.A."/>
            <person name="Moore P.B."/>
            <person name="Noller H.F."/>
            <person name="Ortega J."/>
            <person name="Panse V.G."/>
            <person name="Ramakrishnan V."/>
            <person name="Spahn C.M.T."/>
            <person name="Steitz T.A."/>
            <person name="Tchorzewski M."/>
            <person name="Tollervey D."/>
            <person name="Warren A.J."/>
            <person name="Williamson J.R."/>
            <person name="Wilson D."/>
            <person name="Yonath A."/>
            <person name="Yusupov M."/>
        </authorList>
    </citation>
    <scope>NOMENCLATURE</scope>
</reference>
<reference key="12">
    <citation type="journal article" date="2015" name="Proteomics">
        <title>N-terminome analysis of the human mitochondrial proteome.</title>
        <authorList>
            <person name="Vaca Jacome A.S."/>
            <person name="Rabilloud T."/>
            <person name="Schaeffer-Reiss C."/>
            <person name="Rompais M."/>
            <person name="Ayoub D."/>
            <person name="Lane L."/>
            <person name="Bairoch A."/>
            <person name="Van Dorsselaer A."/>
            <person name="Carapito C."/>
        </authorList>
    </citation>
    <scope>ACETYLATION [LARGE SCALE ANALYSIS] AT ALA-2</scope>
    <scope>CLEAVAGE OF INITIATOR METHIONINE [LARGE SCALE ANALYSIS]</scope>
    <scope>IDENTIFICATION BY MASS SPECTROMETRY [LARGE SCALE ANALYSIS]</scope>
</reference>
<reference key="13">
    <citation type="journal article" date="2023" name="Cell">
        <title>An E3 ligase network engages GCN1 to promote the degradation of translation factors on stalled ribosomes.</title>
        <authorList>
            <person name="Oltion K."/>
            <person name="Carelli J.D."/>
            <person name="Yang T."/>
            <person name="See S.K."/>
            <person name="Wang H.Y."/>
            <person name="Kampmann M."/>
            <person name="Taunton J."/>
        </authorList>
    </citation>
    <scope>UBIQUITINATION AT LYS-92 AND LYS-93</scope>
</reference>
<reference key="14">
    <citation type="journal article" date="2012" name="Nucleic Acids Res.">
        <title>Solution structure of the dimerization domain of the eukaryotic stalk P1/P2 complex reveals the structural organization of eukaryotic stalk complex.</title>
        <authorList>
            <person name="Lee K.M."/>
            <person name="Yu C.W."/>
            <person name="Chiu T.Y."/>
            <person name="Sze K.H."/>
            <person name="Shaw P.C."/>
            <person name="Wong K.B."/>
        </authorList>
    </citation>
    <scope>STRUCTURE BY NMR OF 1-69</scope>
    <scope>SUBUNIT</scope>
</reference>
<reference key="15">
    <citation type="journal article" date="2013" name="Nature">
        <title>Structures of the human and Drosophila 80S ribosome.</title>
        <authorList>
            <person name="Anger A.M."/>
            <person name="Armache J.P."/>
            <person name="Berninghausen O."/>
            <person name="Habeck M."/>
            <person name="Subklewe M."/>
            <person name="Wilson D.N."/>
            <person name="Beckmann R."/>
        </authorList>
    </citation>
    <scope>STRUCTURE BY ELECTRON MICROSCOPY (5.0 ANGSTROMS) OF 80S RIBOSOME</scope>
</reference>
<name>RLA1_HUMAN</name>
<evidence type="ECO:0000256" key="1">
    <source>
        <dbReference type="SAM" id="MobiDB-lite"/>
    </source>
</evidence>
<evidence type="ECO:0000269" key="2">
    <source>
    </source>
</evidence>
<evidence type="ECO:0000269" key="3">
    <source>
    </source>
</evidence>
<evidence type="ECO:0000269" key="4">
    <source>
    </source>
</evidence>
<evidence type="ECO:0000303" key="5">
    <source>
    </source>
</evidence>
<evidence type="ECO:0000303" key="6">
    <source>
    </source>
</evidence>
<evidence type="ECO:0000305" key="7"/>
<evidence type="ECO:0007744" key="8">
    <source>
    </source>
</evidence>
<evidence type="ECO:0007744" key="9">
    <source>
    </source>
</evidence>
<evidence type="ECO:0007744" key="10">
    <source>
    </source>
</evidence>
<evidence type="ECO:0007744" key="11">
    <source>
    </source>
</evidence>
<evidence type="ECO:0007829" key="12">
    <source>
        <dbReference type="PDB" id="2LBF"/>
    </source>
</evidence>
<feature type="initiator methionine" description="Removed" evidence="9 10 11">
    <location>
        <position position="1"/>
    </location>
</feature>
<feature type="chain" id="PRO_0000157686" description="Large ribosomal subunit protein P1">
    <location>
        <begin position="2"/>
        <end position="114"/>
    </location>
</feature>
<feature type="region of interest" description="Disordered" evidence="1">
    <location>
        <begin position="69"/>
        <end position="114"/>
    </location>
</feature>
<feature type="compositionally biased region" description="Low complexity" evidence="1">
    <location>
        <begin position="69"/>
        <end position="88"/>
    </location>
</feature>
<feature type="compositionally biased region" description="Basic and acidic residues" evidence="1">
    <location>
        <begin position="89"/>
        <end position="100"/>
    </location>
</feature>
<feature type="modified residue" description="N-acetylalanine" evidence="9 10 11">
    <location>
        <position position="2"/>
    </location>
</feature>
<feature type="modified residue" description="Phosphoserine" evidence="2 8">
    <location>
        <position position="101"/>
    </location>
</feature>
<feature type="cross-link" description="Glycyl lysine isopeptide (Lys-Gly) (interchain with G-Cter in ubiquitin)" evidence="4">
    <location>
        <position position="92"/>
    </location>
</feature>
<feature type="cross-link" description="Glycyl lysine isopeptide (Lys-Gly) (interchain with G-Cter in ubiquitin)" evidence="4">
    <location>
        <position position="93"/>
    </location>
</feature>
<feature type="splice variant" id="VSP_045244" description="In isoform 2." evidence="5">
    <location>
        <begin position="25"/>
        <end position="49"/>
    </location>
</feature>
<feature type="helix" evidence="12">
    <location>
        <begin position="4"/>
        <end position="19"/>
    </location>
</feature>
<feature type="helix" evidence="12">
    <location>
        <begin position="25"/>
        <end position="35"/>
    </location>
</feature>
<feature type="helix" evidence="12">
    <location>
        <begin position="42"/>
        <end position="50"/>
    </location>
</feature>
<feature type="turn" evidence="12">
    <location>
        <begin position="51"/>
        <end position="53"/>
    </location>
</feature>
<feature type="helix" evidence="12">
    <location>
        <begin position="56"/>
        <end position="60"/>
    </location>
</feature>
<feature type="turn" evidence="12">
    <location>
        <begin position="61"/>
        <end position="64"/>
    </location>
</feature>
<gene>
    <name type="primary">RPLP1</name>
    <name type="synonym">RRP1</name>
</gene>
<keyword id="KW-0002">3D-structure</keyword>
<keyword id="KW-0007">Acetylation</keyword>
<keyword id="KW-0025">Alternative splicing</keyword>
<keyword id="KW-1017">Isopeptide bond</keyword>
<keyword id="KW-0597">Phosphoprotein</keyword>
<keyword id="KW-1267">Proteomics identification</keyword>
<keyword id="KW-1185">Reference proteome</keyword>
<keyword id="KW-0687">Ribonucleoprotein</keyword>
<keyword id="KW-0689">Ribosomal protein</keyword>
<keyword id="KW-0832">Ubl conjugation</keyword>
<sequence length="114" mass="11514">MASVSELACIYSALILHDDEVTVTEDKINALIKAAGVNVEPFWPGLFAKALANVNIGSLICNVGAGGPAPAAGAAPAGGPAPSTAAAPAEEKKVEAKKEESEESDDDMGFGLFD</sequence>
<comment type="function">
    <text>Plays an important role in the elongation step of protein synthesis.</text>
</comment>
<comment type="subunit">
    <text evidence="3">Heterodimer with RPLP2 at the lateral ribosomal stalk of the large ribosomal subunit.</text>
</comment>
<comment type="interaction">
    <interactant intactId="EBI-354582">
        <id>P05386</id>
    </interactant>
    <interactant intactId="EBI-347804">
        <id>P68400</id>
        <label>CSNK2A1</label>
    </interactant>
    <organismsDiffer>false</organismsDiffer>
    <experiments>2</experiments>
</comment>
<comment type="interaction">
    <interactant intactId="EBI-354582">
        <id>P05386</id>
    </interactant>
    <interactant intactId="EBI-352813">
        <id>P05387</id>
        <label>RPLP2</label>
    </interactant>
    <organismsDiffer>false</organismsDiffer>
    <experiments>2</experiments>
</comment>
<comment type="interaction">
    <interactant intactId="EBI-354582">
        <id>P05386</id>
    </interactant>
    <interactant intactId="EBI-3921347">
        <id>P51687</id>
        <label>SUOX</label>
    </interactant>
    <organismsDiffer>false</organismsDiffer>
    <experiments>3</experiments>
</comment>
<comment type="alternative products">
    <event type="alternative splicing"/>
    <isoform>
        <id>P05386-1</id>
        <name>1</name>
        <sequence type="displayed"/>
    </isoform>
    <isoform>
        <id>P05386-2</id>
        <name>2</name>
        <sequence type="described" ref="VSP_045244"/>
    </isoform>
</comment>
<comment type="PTM">
    <text evidence="4">Ubiquitinated at Lys-92 and Lys-93 by RNF14 and RNF25 in response to ribosome collisions (ribosome stalling).</text>
</comment>
<comment type="similarity">
    <text evidence="7">Belongs to the eukaryotic ribosomal protein P1/P2 family.</text>
</comment>
<proteinExistence type="evidence at protein level"/>
<protein>
    <recommendedName>
        <fullName evidence="6">Large ribosomal subunit protein P1</fullName>
    </recommendedName>
    <alternativeName>
        <fullName>60S acidic ribosomal protein P1</fullName>
    </alternativeName>
</protein>
<accession>P05386</accession>
<accession>A6NIB2</accession>